<name>ICP2_ENTH1</name>
<evidence type="ECO:0000255" key="1"/>
<evidence type="ECO:0000269" key="2">
    <source>
    </source>
</evidence>
<evidence type="ECO:0000269" key="3">
    <source>
    </source>
</evidence>
<evidence type="ECO:0000269" key="4">
    <source>
    </source>
</evidence>
<evidence type="ECO:0000269" key="5">
    <source>
    </source>
</evidence>
<evidence type="ECO:0000269" key="6">
    <source>
    </source>
</evidence>
<evidence type="ECO:0000303" key="7">
    <source>
    </source>
</evidence>
<evidence type="ECO:0000305" key="8"/>
<evidence type="ECO:0000305" key="9">
    <source>
    </source>
</evidence>
<evidence type="ECO:0000312" key="10">
    <source>
        <dbReference type="EMBL" id="CAI77274.1"/>
    </source>
</evidence>
<evidence type="ECO:0000312" key="11">
    <source>
        <dbReference type="EMBL" id="EAL43979.1"/>
    </source>
</evidence>
<evidence type="ECO:0007744" key="12">
    <source>
        <dbReference type="PDB" id="3M86"/>
    </source>
</evidence>
<evidence type="ECO:0007744" key="13">
    <source>
        <dbReference type="PDB" id="3M88"/>
    </source>
</evidence>
<evidence type="ECO:0007829" key="14">
    <source>
        <dbReference type="PDB" id="3M86"/>
    </source>
</evidence>
<reference evidence="10" key="1">
    <citation type="journal article" date="2006" name="Parasitol. Res.">
        <title>The second cysteine protease inhibitor, EhICP2, has a different localization in trophozoites of Entamoeba histolytica than EhICP1.</title>
        <authorList>
            <person name="Saric M."/>
            <person name="Vahrmann A."/>
            <person name="Bruchhaus I."/>
            <person name="Bakker-Grunwald T."/>
            <person name="Scholze H."/>
        </authorList>
    </citation>
    <scope>NUCLEOTIDE SEQUENCE [GENOMIC DNA]</scope>
    <scope>FUNCTION</scope>
    <scope>SUBCELLULAR LOCATION</scope>
    <scope>DEVELOPMENTAL STAGE</scope>
    <source>
        <strain evidence="10">ATCC 30459 / HM-1:IMSS / ABRM</strain>
    </source>
</reference>
<reference evidence="11" key="2">
    <citation type="journal article" date="2005" name="Nature">
        <title>The genome of the protist parasite Entamoeba histolytica.</title>
        <authorList>
            <person name="Loftus B.J."/>
            <person name="Anderson I."/>
            <person name="Davies R."/>
            <person name="Alsmark U.C."/>
            <person name="Samuelson J."/>
            <person name="Amedeo P."/>
            <person name="Roncaglia P."/>
            <person name="Berriman M."/>
            <person name="Hirt R.P."/>
            <person name="Mann B.J."/>
            <person name="Nozaki T."/>
            <person name="Suh B."/>
            <person name="Pop M."/>
            <person name="Duchene M."/>
            <person name="Ackers J."/>
            <person name="Tannich E."/>
            <person name="Leippe M."/>
            <person name="Hofer M."/>
            <person name="Bruchhaus I."/>
            <person name="Willhoeft U."/>
            <person name="Bhattacharya A."/>
            <person name="Chillingworth T."/>
            <person name="Churcher C.M."/>
            <person name="Hance Z."/>
            <person name="Harris B."/>
            <person name="Harris D."/>
            <person name="Jagels K."/>
            <person name="Moule S."/>
            <person name="Mungall K.L."/>
            <person name="Ormond D."/>
            <person name="Squares R."/>
            <person name="Whitehead S."/>
            <person name="Quail M.A."/>
            <person name="Rabbinowitsch E."/>
            <person name="Norbertczak H."/>
            <person name="Price C."/>
            <person name="Wang Z."/>
            <person name="Guillen N."/>
            <person name="Gilchrist C."/>
            <person name="Stroup S.E."/>
            <person name="Bhattacharya S."/>
            <person name="Lohia A."/>
            <person name="Foster P.G."/>
            <person name="Sicheritz-Ponten T."/>
            <person name="Weber C."/>
            <person name="Singh U."/>
            <person name="Mukherjee C."/>
            <person name="El-Sayed N.M.A."/>
            <person name="Petri W.A."/>
            <person name="Clark C.G."/>
            <person name="Embley T.M."/>
            <person name="Barrell B.G."/>
            <person name="Fraser C.M."/>
            <person name="Hall N."/>
        </authorList>
    </citation>
    <scope>NUCLEOTIDE SEQUENCE [LARGE SCALE GENOMIC DNA]</scope>
    <source>
        <strain evidence="11">ATCC 30459 / HM-1:IMSS / ABRM</strain>
    </source>
</reference>
<reference key="3">
    <citation type="journal article" date="2006" name="FEBS Lett.">
        <title>Two cysteine protease inhibitors, EhICP1 and 2, localized in distinct compartments, negatively regulate secretion in Entamoeba histolytica.</title>
        <authorList>
            <person name="Sato D."/>
            <person name="Nakada-Tsukui K."/>
            <person name="Okada M."/>
            <person name="Nozaki T."/>
        </authorList>
    </citation>
    <scope>FUNCTION</scope>
    <scope>SUBUNIT</scope>
    <scope>INTERACTION WITH CP2 AND CP5</scope>
    <scope>SUBCELLULAR LOCATION</scope>
    <scope>DEVELOPMENTAL STAGE</scope>
</reference>
<reference key="4">
    <citation type="journal article" date="2012" name="Protist">
        <title>The cysteine protease inhibitors EhICP1 and EhICP2 perform different tasks in the regulation of endogenous protease activity in trophozoites of Entamoeba histolytica.</title>
        <authorList>
            <person name="Saric M."/>
            <person name="Irmer H."/>
            <person name="Eckert D."/>
            <person name="Baer A.K."/>
            <person name="Bruchhaus I."/>
            <person name="Scholze H."/>
        </authorList>
    </citation>
    <scope>FUNCTION</scope>
    <scope>SUBCELLULAR LOCATION</scope>
    <scope>DEVELOPMENTAL STAGE</scope>
    <scope>DISRUPTION PHENOTYPE</scope>
</reference>
<reference key="5">
    <citation type="journal article" date="2020" name="Biochim. Biophys. Acta">
        <title>Solution structure of the inhibitor of cysteine proteases 1 from Entamoeba histolytica reveals a possible auto regulatory mechanism.</title>
        <authorList>
            <person name="Flores-Solis D."/>
            <person name="Mendoza A."/>
            <person name="Renteria-Gonzalez I."/>
            <person name="Casados-Vazquez L.E."/>
            <person name="Trasvina-Arenas C.H."/>
            <person name="Jimenez-Sandoval P."/>
            <person name="Benitez-Cardoza C.G."/>
            <person name="Del Rio-Portilla F."/>
            <person name="Brieba L.G."/>
        </authorList>
    </citation>
    <scope>FUNCTION</scope>
    <scope>SUBUNIT</scope>
    <scope>MOTIF</scope>
    <scope>MUTAGENESIS OF SER-47</scope>
</reference>
<reference evidence="12 13" key="6">
    <citation type="journal article" date="2011" name="Gene">
        <title>Crystal structure of the cysteine protease inhibitor 2 from Entamoeba histolytica: functional convergence of a common protein fold.</title>
        <authorList>
            <person name="Casados-Vazquez L.E."/>
            <person name="Lara-Gonzalez S."/>
            <person name="Brieba L.G."/>
        </authorList>
    </citation>
    <scope>X-RAY CRYSTALLOGRAPHY (1.65 ANGSTROMS) OF 17-123</scope>
    <scope>FUNCTION</scope>
    <scope>MOTIF</scope>
</reference>
<organism evidence="11">
    <name type="scientific">Entamoeba histolytica (strain ATCC 30459 / HM-1:IMSS / ABRM)</name>
    <dbReference type="NCBI Taxonomy" id="294381"/>
    <lineage>
        <taxon>Eukaryota</taxon>
        <taxon>Amoebozoa</taxon>
        <taxon>Evosea</taxon>
        <taxon>Archamoebae</taxon>
        <taxon>Mastigamoebida</taxon>
        <taxon>Entamoebidae</taxon>
        <taxon>Entamoeba</taxon>
    </lineage>
</organism>
<dbReference type="EMBL" id="AJ890473">
    <property type="protein sequence ID" value="CAI77274.1"/>
    <property type="molecule type" value="Genomic_DNA"/>
</dbReference>
<dbReference type="EMBL" id="DS571224">
    <property type="protein sequence ID" value="EAL43979.1"/>
    <property type="molecule type" value="Genomic_DNA"/>
</dbReference>
<dbReference type="RefSeq" id="XP_649363.1">
    <property type="nucleotide sequence ID" value="XM_644271.1"/>
</dbReference>
<dbReference type="PDB" id="3M86">
    <property type="method" value="X-ray"/>
    <property type="resolution" value="1.65 A"/>
    <property type="chains" value="A/B=17-123"/>
</dbReference>
<dbReference type="PDB" id="3M88">
    <property type="method" value="X-ray"/>
    <property type="resolution" value="1.90 A"/>
    <property type="chains" value="A/B=17-123"/>
</dbReference>
<dbReference type="PDBsum" id="3M86"/>
<dbReference type="PDBsum" id="3M88"/>
<dbReference type="SMR" id="Q4GZL2"/>
<dbReference type="MEROPS" id="I42.003"/>
<dbReference type="EnsemblProtists" id="GAT95477">
    <property type="protein sequence ID" value="GAT95477"/>
    <property type="gene ID" value="CL6EHI_040460"/>
</dbReference>
<dbReference type="EnsemblProtists" id="rna_EHI_040460-1">
    <property type="protein sequence ID" value="rna_EHI_040460-1"/>
    <property type="gene ID" value="EHI_040460"/>
</dbReference>
<dbReference type="GeneID" id="3403658"/>
<dbReference type="KEGG" id="ehi:EHI_040460"/>
<dbReference type="VEuPathDB" id="AmoebaDB:EHI5A_123780"/>
<dbReference type="VEuPathDB" id="AmoebaDB:EHI7A_091380"/>
<dbReference type="VEuPathDB" id="AmoebaDB:EHI8A_094330"/>
<dbReference type="VEuPathDB" id="AmoebaDB:EHI_040460"/>
<dbReference type="VEuPathDB" id="AmoebaDB:KM1_163750"/>
<dbReference type="eggNOG" id="ENOG502RH63">
    <property type="taxonomic scope" value="Eukaryota"/>
</dbReference>
<dbReference type="HOGENOM" id="CLU_102057_0_1_1"/>
<dbReference type="OMA" id="LCISTHA"/>
<dbReference type="OrthoDB" id="25461at2759"/>
<dbReference type="EvolutionaryTrace" id="Q4GZL2"/>
<dbReference type="Proteomes" id="UP000001926">
    <property type="component" value="Partially assembled WGS sequence"/>
</dbReference>
<dbReference type="GO" id="GO:0005764">
    <property type="term" value="C:lysosome"/>
    <property type="evidence" value="ECO:0000314"/>
    <property type="project" value="UniProtKB"/>
</dbReference>
<dbReference type="GO" id="GO:0045335">
    <property type="term" value="C:phagocytic vesicle"/>
    <property type="evidence" value="ECO:0000314"/>
    <property type="project" value="UniProtKB"/>
</dbReference>
<dbReference type="GO" id="GO:0004869">
    <property type="term" value="F:cysteine-type endopeptidase inhibitor activity"/>
    <property type="evidence" value="ECO:0000314"/>
    <property type="project" value="UniProtKB"/>
</dbReference>
<dbReference type="GO" id="GO:0019899">
    <property type="term" value="F:enzyme binding"/>
    <property type="evidence" value="ECO:0000353"/>
    <property type="project" value="UniProtKB"/>
</dbReference>
<dbReference type="Gene3D" id="2.60.40.2020">
    <property type="match status" value="1"/>
</dbReference>
<dbReference type="InterPro" id="IPR036331">
    <property type="entry name" value="Chagasin-like_sf"/>
</dbReference>
<dbReference type="InterPro" id="IPR052781">
    <property type="entry name" value="Cys_protease_inhibitor_I42"/>
</dbReference>
<dbReference type="InterPro" id="IPR018990">
    <property type="entry name" value="Prot_inh_I42_chagasin"/>
</dbReference>
<dbReference type="PANTHER" id="PTHR36530:SF1">
    <property type="entry name" value="AMOEBIASIN-1"/>
    <property type="match status" value="1"/>
</dbReference>
<dbReference type="PANTHER" id="PTHR36530">
    <property type="entry name" value="INHIBITOR OF CYSTEINE PEPTIDASE"/>
    <property type="match status" value="1"/>
</dbReference>
<dbReference type="Pfam" id="PF09394">
    <property type="entry name" value="Inhibitor_I42"/>
    <property type="match status" value="1"/>
</dbReference>
<dbReference type="SUPFAM" id="SSF141066">
    <property type="entry name" value="ICP-like"/>
    <property type="match status" value="1"/>
</dbReference>
<sequence length="123" mass="14000">MKQFIFFALLCTSTYAAIHILTEKEDHATLHISFNDLIKIQLRTNPSTGYAWNIEYPTDTFSLSQDTIKAEPHPSGMVGFPSIREIQLKPLKVGTTTIKLGYSRPWEKGKEPLRSLTYSVVIR</sequence>
<comment type="function">
    <text evidence="2 3 4 5 6">Cysteine protease inhibitor (PubMed:16802137, PubMed:16979632, PubMed:20951777, PubMed:21440496, PubMed:32731033). Inhibits cysteine proteases CP1, CP2 and to a lesser extent CP5 (PubMed:16979632).</text>
</comment>
<comment type="subunit">
    <text evidence="3 6">Monomer (PubMed:32731033). May form homodimer (PubMed:16979632). Interacts with cysteine protease CP2 (PubMed:16979632). Interacts with cysteine protease CP5 (PubMed:16979632).</text>
</comment>
<comment type="subcellular location">
    <subcellularLocation>
        <location evidence="2">Cytoplasmic vesicle</location>
    </subcellularLocation>
    <subcellularLocation>
        <location evidence="3 5">Lysosome</location>
    </subcellularLocation>
    <subcellularLocation>
        <location evidence="3">Cytoplasmic vesicle</location>
        <location evidence="3">Phagosome</location>
    </subcellularLocation>
    <text evidence="3">Upon host erythrocyte engulfment, localizes to phagosomes.</text>
</comment>
<comment type="developmental stage">
    <text evidence="2 3 5">Expressed in trophozoites (at protein level).</text>
</comment>
<comment type="domain">
    <text evidence="4 9">The BC, DE and FG loops form a tripartite wedge that blocks the substrate-binding site of target cysteine proteases (PubMed:20951777). The BC loop interacts with the catalytically active cysteine and histidine residues of the protease catalytic center (Probable) (PubMed:20951777).</text>
</comment>
<comment type="disruption phenotype">
    <text evidence="5">RNAi-mediated knockdown causes an increase in peptidolytic activity.</text>
</comment>
<comment type="similarity">
    <text evidence="8">Belongs to the protease inhibitor I42 family.</text>
</comment>
<feature type="signal peptide" evidence="1">
    <location>
        <begin position="1"/>
        <end position="16"/>
    </location>
</feature>
<feature type="chain" id="PRO_5000074670" description="Amoebiasin-2">
    <location>
        <begin position="17"/>
        <end position="123"/>
    </location>
</feature>
<feature type="short sequence motif" description="BC loop" evidence="4 6">
    <location>
        <begin position="45"/>
        <end position="50"/>
    </location>
</feature>
<feature type="short sequence motif" description="DE loop" evidence="4">
    <location>
        <begin position="71"/>
        <end position="81"/>
    </location>
</feature>
<feature type="short sequence motif" description="FG loop" evidence="4">
    <location>
        <begin position="105"/>
        <end position="114"/>
    </location>
</feature>
<feature type="mutagenesis site" description="Decreases inhibitory activity towards model target papain." evidence="6">
    <original>S</original>
    <variation>T</variation>
    <location>
        <position position="47"/>
    </location>
</feature>
<feature type="strand" evidence="14">
    <location>
        <begin position="18"/>
        <end position="21"/>
    </location>
</feature>
<feature type="helix" evidence="14">
    <location>
        <begin position="23"/>
        <end position="25"/>
    </location>
</feature>
<feature type="strand" evidence="14">
    <location>
        <begin position="29"/>
        <end position="33"/>
    </location>
</feature>
<feature type="strand" evidence="14">
    <location>
        <begin position="37"/>
        <end position="44"/>
    </location>
</feature>
<feature type="helix" evidence="14">
    <location>
        <begin position="46"/>
        <end position="48"/>
    </location>
</feature>
<feature type="strand" evidence="14">
    <location>
        <begin position="51"/>
        <end position="55"/>
    </location>
</feature>
<feature type="turn" evidence="14">
    <location>
        <begin position="58"/>
        <end position="60"/>
    </location>
</feature>
<feature type="strand" evidence="14">
    <location>
        <begin position="61"/>
        <end position="70"/>
    </location>
</feature>
<feature type="strand" evidence="14">
    <location>
        <begin position="77"/>
        <end position="79"/>
    </location>
</feature>
<feature type="strand" evidence="14">
    <location>
        <begin position="81"/>
        <end position="92"/>
    </location>
</feature>
<feature type="strand" evidence="14">
    <location>
        <begin position="94"/>
        <end position="103"/>
    </location>
</feature>
<feature type="strand" evidence="14">
    <location>
        <begin position="113"/>
        <end position="123"/>
    </location>
</feature>
<gene>
    <name evidence="7" type="primary">ICP2</name>
    <name evidence="11" type="ORF">EHI_040460</name>
</gene>
<protein>
    <recommendedName>
        <fullName evidence="7">Amoebiasin-2</fullName>
    </recommendedName>
    <alternativeName>
        <fullName evidence="7">Cysteine protease inhibitor 2</fullName>
    </alternativeName>
    <alternativeName>
        <fullName evidence="7">EhICP2</fullName>
        <shortName>ICP-2</shortName>
    </alternativeName>
</protein>
<accession>Q4GZL2</accession>
<accession>A0A175JPA0</accession>
<accession>C4M2H5</accession>
<keyword id="KW-0002">3D-structure</keyword>
<keyword id="KW-0968">Cytoplasmic vesicle</keyword>
<keyword id="KW-0458">Lysosome</keyword>
<keyword id="KW-0646">Protease inhibitor</keyword>
<keyword id="KW-1185">Reference proteome</keyword>
<keyword id="KW-0732">Signal</keyword>
<keyword id="KW-0789">Thiol protease inhibitor</keyword>
<proteinExistence type="evidence at protein level"/>